<gene>
    <name evidence="1" type="primary">rplE</name>
    <name type="ordered locus">XOO3375</name>
</gene>
<proteinExistence type="inferred from homology"/>
<dbReference type="EMBL" id="AP008229">
    <property type="protein sequence ID" value="BAE70130.1"/>
    <property type="molecule type" value="Genomic_DNA"/>
</dbReference>
<dbReference type="RefSeq" id="WP_011260024.1">
    <property type="nucleotide sequence ID" value="NC_007705.1"/>
</dbReference>
<dbReference type="SMR" id="Q2NZZ7"/>
<dbReference type="KEGG" id="xom:XOO3375"/>
<dbReference type="HOGENOM" id="CLU_061015_2_1_6"/>
<dbReference type="GO" id="GO:1990904">
    <property type="term" value="C:ribonucleoprotein complex"/>
    <property type="evidence" value="ECO:0007669"/>
    <property type="project" value="UniProtKB-KW"/>
</dbReference>
<dbReference type="GO" id="GO:0005840">
    <property type="term" value="C:ribosome"/>
    <property type="evidence" value="ECO:0007669"/>
    <property type="project" value="UniProtKB-KW"/>
</dbReference>
<dbReference type="GO" id="GO:0019843">
    <property type="term" value="F:rRNA binding"/>
    <property type="evidence" value="ECO:0007669"/>
    <property type="project" value="UniProtKB-UniRule"/>
</dbReference>
<dbReference type="GO" id="GO:0003735">
    <property type="term" value="F:structural constituent of ribosome"/>
    <property type="evidence" value="ECO:0007669"/>
    <property type="project" value="InterPro"/>
</dbReference>
<dbReference type="GO" id="GO:0000049">
    <property type="term" value="F:tRNA binding"/>
    <property type="evidence" value="ECO:0007669"/>
    <property type="project" value="UniProtKB-UniRule"/>
</dbReference>
<dbReference type="GO" id="GO:0006412">
    <property type="term" value="P:translation"/>
    <property type="evidence" value="ECO:0007669"/>
    <property type="project" value="UniProtKB-UniRule"/>
</dbReference>
<dbReference type="FunFam" id="3.30.1440.10:FF:000001">
    <property type="entry name" value="50S ribosomal protein L5"/>
    <property type="match status" value="1"/>
</dbReference>
<dbReference type="Gene3D" id="3.30.1440.10">
    <property type="match status" value="1"/>
</dbReference>
<dbReference type="HAMAP" id="MF_01333_B">
    <property type="entry name" value="Ribosomal_uL5_B"/>
    <property type="match status" value="1"/>
</dbReference>
<dbReference type="InterPro" id="IPR002132">
    <property type="entry name" value="Ribosomal_uL5"/>
</dbReference>
<dbReference type="InterPro" id="IPR020930">
    <property type="entry name" value="Ribosomal_uL5_bac-type"/>
</dbReference>
<dbReference type="InterPro" id="IPR031309">
    <property type="entry name" value="Ribosomal_uL5_C"/>
</dbReference>
<dbReference type="InterPro" id="IPR020929">
    <property type="entry name" value="Ribosomal_uL5_CS"/>
</dbReference>
<dbReference type="InterPro" id="IPR022803">
    <property type="entry name" value="Ribosomal_uL5_dom_sf"/>
</dbReference>
<dbReference type="InterPro" id="IPR031310">
    <property type="entry name" value="Ribosomal_uL5_N"/>
</dbReference>
<dbReference type="NCBIfam" id="NF000585">
    <property type="entry name" value="PRK00010.1"/>
    <property type="match status" value="1"/>
</dbReference>
<dbReference type="PANTHER" id="PTHR11994">
    <property type="entry name" value="60S RIBOSOMAL PROTEIN L11-RELATED"/>
    <property type="match status" value="1"/>
</dbReference>
<dbReference type="Pfam" id="PF00281">
    <property type="entry name" value="Ribosomal_L5"/>
    <property type="match status" value="1"/>
</dbReference>
<dbReference type="Pfam" id="PF00673">
    <property type="entry name" value="Ribosomal_L5_C"/>
    <property type="match status" value="1"/>
</dbReference>
<dbReference type="PIRSF" id="PIRSF002161">
    <property type="entry name" value="Ribosomal_L5"/>
    <property type="match status" value="1"/>
</dbReference>
<dbReference type="SUPFAM" id="SSF55282">
    <property type="entry name" value="RL5-like"/>
    <property type="match status" value="1"/>
</dbReference>
<dbReference type="PROSITE" id="PS00358">
    <property type="entry name" value="RIBOSOMAL_L5"/>
    <property type="match status" value="1"/>
</dbReference>
<comment type="function">
    <text evidence="1">This is one of the proteins that bind and probably mediate the attachment of the 5S RNA into the large ribosomal subunit, where it forms part of the central protuberance. In the 70S ribosome it contacts protein S13 of the 30S subunit (bridge B1b), connecting the 2 subunits; this bridge is implicated in subunit movement. Contacts the P site tRNA; the 5S rRNA and some of its associated proteins might help stabilize positioning of ribosome-bound tRNAs.</text>
</comment>
<comment type="subunit">
    <text evidence="1">Part of the 50S ribosomal subunit; part of the 5S rRNA/L5/L18/L25 subcomplex. Contacts the 5S rRNA and the P site tRNA. Forms a bridge to the 30S subunit in the 70S ribosome.</text>
</comment>
<comment type="similarity">
    <text evidence="1">Belongs to the universal ribosomal protein uL5 family.</text>
</comment>
<protein>
    <recommendedName>
        <fullName evidence="1">Large ribosomal subunit protein uL5</fullName>
    </recommendedName>
    <alternativeName>
        <fullName evidence="2">50S ribosomal protein L5</fullName>
    </alternativeName>
</protein>
<sequence length="180" mass="20130">MNTRLEKFYKENVVPALMKEFGYTNPMEVPKLVKVTLNMGVGEAASNKKILENAVADMSKISGQKPVVTKSRVSVASFKIRDGWPIGCKTTLRRAKMYEFLDRLINISLPRVRDFRGVSGRSFDGRGNFNMGVKEQIIFPEIDFDAVDAIRGMDIAVTTTAKTDAEAKALLAAFKFPFRN</sequence>
<organism>
    <name type="scientific">Xanthomonas oryzae pv. oryzae (strain MAFF 311018)</name>
    <dbReference type="NCBI Taxonomy" id="342109"/>
    <lineage>
        <taxon>Bacteria</taxon>
        <taxon>Pseudomonadati</taxon>
        <taxon>Pseudomonadota</taxon>
        <taxon>Gammaproteobacteria</taxon>
        <taxon>Lysobacterales</taxon>
        <taxon>Lysobacteraceae</taxon>
        <taxon>Xanthomonas</taxon>
    </lineage>
</organism>
<feature type="chain" id="PRO_0000243089" description="Large ribosomal subunit protein uL5">
    <location>
        <begin position="1"/>
        <end position="180"/>
    </location>
</feature>
<name>RL5_XANOM</name>
<keyword id="KW-0687">Ribonucleoprotein</keyword>
<keyword id="KW-0689">Ribosomal protein</keyword>
<keyword id="KW-0694">RNA-binding</keyword>
<keyword id="KW-0699">rRNA-binding</keyword>
<keyword id="KW-0820">tRNA-binding</keyword>
<accession>Q2NZZ7</accession>
<reference key="1">
    <citation type="journal article" date="2005" name="Jpn. Agric. Res. Q.">
        <title>Genome sequence of Xanthomonas oryzae pv. oryzae suggests contribution of large numbers of effector genes and insertion sequences to its race diversity.</title>
        <authorList>
            <person name="Ochiai H."/>
            <person name="Inoue Y."/>
            <person name="Takeya M."/>
            <person name="Sasaki A."/>
            <person name="Kaku H."/>
        </authorList>
    </citation>
    <scope>NUCLEOTIDE SEQUENCE [LARGE SCALE GENOMIC DNA]</scope>
    <source>
        <strain>MAFF 311018</strain>
    </source>
</reference>
<evidence type="ECO:0000255" key="1">
    <source>
        <dbReference type="HAMAP-Rule" id="MF_01333"/>
    </source>
</evidence>
<evidence type="ECO:0000305" key="2"/>